<name>PURA_PSEAB</name>
<dbReference type="EC" id="6.3.4.4" evidence="1"/>
<dbReference type="EMBL" id="CP000438">
    <property type="protein sequence ID" value="ABJ14323.1"/>
    <property type="molecule type" value="Genomic_DNA"/>
</dbReference>
<dbReference type="RefSeq" id="WP_003095642.1">
    <property type="nucleotide sequence ID" value="NZ_CP034244.1"/>
</dbReference>
<dbReference type="SMR" id="Q02F80"/>
<dbReference type="KEGG" id="pau:PA14_65230"/>
<dbReference type="PseudoCAP" id="PA14_65230"/>
<dbReference type="HOGENOM" id="CLU_029848_0_0_6"/>
<dbReference type="BioCyc" id="PAER208963:G1G74-5513-MONOMER"/>
<dbReference type="UniPathway" id="UPA00075">
    <property type="reaction ID" value="UER00335"/>
</dbReference>
<dbReference type="Proteomes" id="UP000000653">
    <property type="component" value="Chromosome"/>
</dbReference>
<dbReference type="GO" id="GO:0005737">
    <property type="term" value="C:cytoplasm"/>
    <property type="evidence" value="ECO:0007669"/>
    <property type="project" value="UniProtKB-SubCell"/>
</dbReference>
<dbReference type="GO" id="GO:0004019">
    <property type="term" value="F:adenylosuccinate synthase activity"/>
    <property type="evidence" value="ECO:0007669"/>
    <property type="project" value="UniProtKB-UniRule"/>
</dbReference>
<dbReference type="GO" id="GO:0005525">
    <property type="term" value="F:GTP binding"/>
    <property type="evidence" value="ECO:0007669"/>
    <property type="project" value="UniProtKB-UniRule"/>
</dbReference>
<dbReference type="GO" id="GO:0000287">
    <property type="term" value="F:magnesium ion binding"/>
    <property type="evidence" value="ECO:0007669"/>
    <property type="project" value="UniProtKB-UniRule"/>
</dbReference>
<dbReference type="GO" id="GO:0044208">
    <property type="term" value="P:'de novo' AMP biosynthetic process"/>
    <property type="evidence" value="ECO:0007669"/>
    <property type="project" value="UniProtKB-UniRule"/>
</dbReference>
<dbReference type="GO" id="GO:0046040">
    <property type="term" value="P:IMP metabolic process"/>
    <property type="evidence" value="ECO:0007669"/>
    <property type="project" value="TreeGrafter"/>
</dbReference>
<dbReference type="CDD" id="cd03108">
    <property type="entry name" value="AdSS"/>
    <property type="match status" value="1"/>
</dbReference>
<dbReference type="FunFam" id="1.10.300.10:FF:000001">
    <property type="entry name" value="Adenylosuccinate synthetase"/>
    <property type="match status" value="1"/>
</dbReference>
<dbReference type="FunFam" id="3.90.170.10:FF:000001">
    <property type="entry name" value="Adenylosuccinate synthetase"/>
    <property type="match status" value="1"/>
</dbReference>
<dbReference type="Gene3D" id="3.40.440.10">
    <property type="entry name" value="Adenylosuccinate Synthetase, subunit A, domain 1"/>
    <property type="match status" value="1"/>
</dbReference>
<dbReference type="Gene3D" id="1.10.300.10">
    <property type="entry name" value="Adenylosuccinate Synthetase, subunit A, domain 2"/>
    <property type="match status" value="1"/>
</dbReference>
<dbReference type="Gene3D" id="3.90.170.10">
    <property type="entry name" value="Adenylosuccinate Synthetase, subunit A, domain 3"/>
    <property type="match status" value="1"/>
</dbReference>
<dbReference type="HAMAP" id="MF_00011">
    <property type="entry name" value="Adenylosucc_synth"/>
    <property type="match status" value="1"/>
</dbReference>
<dbReference type="InterPro" id="IPR018220">
    <property type="entry name" value="Adenylosuccin_syn_GTP-bd"/>
</dbReference>
<dbReference type="InterPro" id="IPR033128">
    <property type="entry name" value="Adenylosuccin_syn_Lys_AS"/>
</dbReference>
<dbReference type="InterPro" id="IPR042109">
    <property type="entry name" value="Adenylosuccinate_synth_dom1"/>
</dbReference>
<dbReference type="InterPro" id="IPR042110">
    <property type="entry name" value="Adenylosuccinate_synth_dom2"/>
</dbReference>
<dbReference type="InterPro" id="IPR042111">
    <property type="entry name" value="Adenylosuccinate_synth_dom3"/>
</dbReference>
<dbReference type="InterPro" id="IPR001114">
    <property type="entry name" value="Adenylosuccinate_synthetase"/>
</dbReference>
<dbReference type="InterPro" id="IPR027417">
    <property type="entry name" value="P-loop_NTPase"/>
</dbReference>
<dbReference type="NCBIfam" id="NF002223">
    <property type="entry name" value="PRK01117.1"/>
    <property type="match status" value="1"/>
</dbReference>
<dbReference type="NCBIfam" id="TIGR00184">
    <property type="entry name" value="purA"/>
    <property type="match status" value="1"/>
</dbReference>
<dbReference type="PANTHER" id="PTHR11846">
    <property type="entry name" value="ADENYLOSUCCINATE SYNTHETASE"/>
    <property type="match status" value="1"/>
</dbReference>
<dbReference type="PANTHER" id="PTHR11846:SF0">
    <property type="entry name" value="ADENYLOSUCCINATE SYNTHETASE"/>
    <property type="match status" value="1"/>
</dbReference>
<dbReference type="Pfam" id="PF00709">
    <property type="entry name" value="Adenylsucc_synt"/>
    <property type="match status" value="1"/>
</dbReference>
<dbReference type="SMART" id="SM00788">
    <property type="entry name" value="Adenylsucc_synt"/>
    <property type="match status" value="1"/>
</dbReference>
<dbReference type="SUPFAM" id="SSF52540">
    <property type="entry name" value="P-loop containing nucleoside triphosphate hydrolases"/>
    <property type="match status" value="1"/>
</dbReference>
<dbReference type="PROSITE" id="PS01266">
    <property type="entry name" value="ADENYLOSUCCIN_SYN_1"/>
    <property type="match status" value="1"/>
</dbReference>
<dbReference type="PROSITE" id="PS00513">
    <property type="entry name" value="ADENYLOSUCCIN_SYN_2"/>
    <property type="match status" value="1"/>
</dbReference>
<organism>
    <name type="scientific">Pseudomonas aeruginosa (strain UCBPP-PA14)</name>
    <dbReference type="NCBI Taxonomy" id="208963"/>
    <lineage>
        <taxon>Bacteria</taxon>
        <taxon>Pseudomonadati</taxon>
        <taxon>Pseudomonadota</taxon>
        <taxon>Gammaproteobacteria</taxon>
        <taxon>Pseudomonadales</taxon>
        <taxon>Pseudomonadaceae</taxon>
        <taxon>Pseudomonas</taxon>
    </lineage>
</organism>
<evidence type="ECO:0000255" key="1">
    <source>
        <dbReference type="HAMAP-Rule" id="MF_00011"/>
    </source>
</evidence>
<sequence>MGKNVVVLGTQWGDEGKGKIVDLLTEQAAAVVRYQGGHNAGHTLVIDGEKTVLHLIPSGILREGVQCLIGNGVVLAPDALLREITKLEEKGVPVRERLRISPSCPLILSYHVALDQAREKARGEAKIGTTGRGIGPAYEDKVARRGLRVGDLFHRERFAAKLGELLDYHNFVLQHYYKEPAIDFQKTLDEAMEYAELLKPMMADVAATLHDLRKHGKDIMFEGAQGSLLDIDHGTYPYVTSSNTTAGGTATGSGFGPLYLDYVLGITKAYTTRVGSGPFPTELFDDVGAYLAKRGHEFGATTGRARRCGWFDAVILRRAIEINSISGLCLTKLDVLDGLDVVRLCVGYKNADGDVLEAPTDADSYIGLQPVYEEMPGWSESTVGAKTLEELPANARAYIKRVEELVGAPIDIISTGPDRNETIILRHPFA</sequence>
<comment type="function">
    <text evidence="1">Plays an important role in the de novo pathway of purine nucleotide biosynthesis. Catalyzes the first committed step in the biosynthesis of AMP from IMP.</text>
</comment>
<comment type="catalytic activity">
    <reaction evidence="1">
        <text>IMP + L-aspartate + GTP = N(6)-(1,2-dicarboxyethyl)-AMP + GDP + phosphate + 2 H(+)</text>
        <dbReference type="Rhea" id="RHEA:15753"/>
        <dbReference type="ChEBI" id="CHEBI:15378"/>
        <dbReference type="ChEBI" id="CHEBI:29991"/>
        <dbReference type="ChEBI" id="CHEBI:37565"/>
        <dbReference type="ChEBI" id="CHEBI:43474"/>
        <dbReference type="ChEBI" id="CHEBI:57567"/>
        <dbReference type="ChEBI" id="CHEBI:58053"/>
        <dbReference type="ChEBI" id="CHEBI:58189"/>
        <dbReference type="EC" id="6.3.4.4"/>
    </reaction>
</comment>
<comment type="cofactor">
    <cofactor evidence="1">
        <name>Mg(2+)</name>
        <dbReference type="ChEBI" id="CHEBI:18420"/>
    </cofactor>
    <text evidence="1">Binds 1 Mg(2+) ion per subunit.</text>
</comment>
<comment type="pathway">
    <text evidence="1">Purine metabolism; AMP biosynthesis via de novo pathway; AMP from IMP: step 1/2.</text>
</comment>
<comment type="subunit">
    <text evidence="1">Homodimer.</text>
</comment>
<comment type="subcellular location">
    <subcellularLocation>
        <location evidence="1">Cytoplasm</location>
    </subcellularLocation>
</comment>
<comment type="similarity">
    <text evidence="1">Belongs to the adenylosuccinate synthetase family.</text>
</comment>
<protein>
    <recommendedName>
        <fullName evidence="1">Adenylosuccinate synthetase</fullName>
        <shortName evidence="1">AMPSase</shortName>
        <shortName evidence="1">AdSS</shortName>
        <ecNumber evidence="1">6.3.4.4</ecNumber>
    </recommendedName>
    <alternativeName>
        <fullName evidence="1">IMP--aspartate ligase</fullName>
    </alternativeName>
</protein>
<feature type="chain" id="PRO_1000000895" description="Adenylosuccinate synthetase">
    <location>
        <begin position="1"/>
        <end position="430"/>
    </location>
</feature>
<feature type="active site" description="Proton acceptor" evidence="1">
    <location>
        <position position="14"/>
    </location>
</feature>
<feature type="active site" description="Proton donor" evidence="1">
    <location>
        <position position="42"/>
    </location>
</feature>
<feature type="binding site" evidence="1">
    <location>
        <begin position="13"/>
        <end position="19"/>
    </location>
    <ligand>
        <name>GTP</name>
        <dbReference type="ChEBI" id="CHEBI:37565"/>
    </ligand>
</feature>
<feature type="binding site" description="in other chain" evidence="1">
    <location>
        <begin position="14"/>
        <end position="17"/>
    </location>
    <ligand>
        <name>IMP</name>
        <dbReference type="ChEBI" id="CHEBI:58053"/>
        <note>ligand shared between dimeric partners</note>
    </ligand>
</feature>
<feature type="binding site" evidence="1">
    <location>
        <position position="14"/>
    </location>
    <ligand>
        <name>Mg(2+)</name>
        <dbReference type="ChEBI" id="CHEBI:18420"/>
    </ligand>
</feature>
<feature type="binding site" description="in other chain" evidence="1">
    <location>
        <begin position="39"/>
        <end position="42"/>
    </location>
    <ligand>
        <name>IMP</name>
        <dbReference type="ChEBI" id="CHEBI:58053"/>
        <note>ligand shared between dimeric partners</note>
    </ligand>
</feature>
<feature type="binding site" evidence="1">
    <location>
        <begin position="41"/>
        <end position="43"/>
    </location>
    <ligand>
        <name>GTP</name>
        <dbReference type="ChEBI" id="CHEBI:37565"/>
    </ligand>
</feature>
<feature type="binding site" evidence="1">
    <location>
        <position position="41"/>
    </location>
    <ligand>
        <name>Mg(2+)</name>
        <dbReference type="ChEBI" id="CHEBI:18420"/>
    </ligand>
</feature>
<feature type="binding site" description="in other chain" evidence="1">
    <location>
        <position position="130"/>
    </location>
    <ligand>
        <name>IMP</name>
        <dbReference type="ChEBI" id="CHEBI:58053"/>
        <note>ligand shared between dimeric partners</note>
    </ligand>
</feature>
<feature type="binding site" evidence="1">
    <location>
        <position position="144"/>
    </location>
    <ligand>
        <name>IMP</name>
        <dbReference type="ChEBI" id="CHEBI:58053"/>
        <note>ligand shared between dimeric partners</note>
    </ligand>
</feature>
<feature type="binding site" description="in other chain" evidence="1">
    <location>
        <position position="225"/>
    </location>
    <ligand>
        <name>IMP</name>
        <dbReference type="ChEBI" id="CHEBI:58053"/>
        <note>ligand shared between dimeric partners</note>
    </ligand>
</feature>
<feature type="binding site" description="in other chain" evidence="1">
    <location>
        <position position="240"/>
    </location>
    <ligand>
        <name>IMP</name>
        <dbReference type="ChEBI" id="CHEBI:58053"/>
        <note>ligand shared between dimeric partners</note>
    </ligand>
</feature>
<feature type="binding site" evidence="1">
    <location>
        <begin position="300"/>
        <end position="306"/>
    </location>
    <ligand>
        <name>substrate</name>
    </ligand>
</feature>
<feature type="binding site" description="in other chain" evidence="1">
    <location>
        <position position="304"/>
    </location>
    <ligand>
        <name>IMP</name>
        <dbReference type="ChEBI" id="CHEBI:58053"/>
        <note>ligand shared between dimeric partners</note>
    </ligand>
</feature>
<feature type="binding site" evidence="1">
    <location>
        <position position="306"/>
    </location>
    <ligand>
        <name>GTP</name>
        <dbReference type="ChEBI" id="CHEBI:37565"/>
    </ligand>
</feature>
<feature type="binding site" evidence="1">
    <location>
        <begin position="332"/>
        <end position="334"/>
    </location>
    <ligand>
        <name>GTP</name>
        <dbReference type="ChEBI" id="CHEBI:37565"/>
    </ligand>
</feature>
<feature type="binding site" evidence="1">
    <location>
        <begin position="414"/>
        <end position="416"/>
    </location>
    <ligand>
        <name>GTP</name>
        <dbReference type="ChEBI" id="CHEBI:37565"/>
    </ligand>
</feature>
<gene>
    <name evidence="1" type="primary">purA</name>
    <name type="ordered locus">PA14_65230</name>
</gene>
<proteinExistence type="inferred from homology"/>
<reference key="1">
    <citation type="journal article" date="2006" name="Genome Biol.">
        <title>Genomic analysis reveals that Pseudomonas aeruginosa virulence is combinatorial.</title>
        <authorList>
            <person name="Lee D.G."/>
            <person name="Urbach J.M."/>
            <person name="Wu G."/>
            <person name="Liberati N.T."/>
            <person name="Feinbaum R.L."/>
            <person name="Miyata S."/>
            <person name="Diggins L.T."/>
            <person name="He J."/>
            <person name="Saucier M."/>
            <person name="Deziel E."/>
            <person name="Friedman L."/>
            <person name="Li L."/>
            <person name="Grills G."/>
            <person name="Montgomery K."/>
            <person name="Kucherlapati R."/>
            <person name="Rahme L.G."/>
            <person name="Ausubel F.M."/>
        </authorList>
    </citation>
    <scope>NUCLEOTIDE SEQUENCE [LARGE SCALE GENOMIC DNA]</scope>
    <source>
        <strain>UCBPP-PA14</strain>
    </source>
</reference>
<accession>Q02F80</accession>
<keyword id="KW-0963">Cytoplasm</keyword>
<keyword id="KW-0342">GTP-binding</keyword>
<keyword id="KW-0436">Ligase</keyword>
<keyword id="KW-0460">Magnesium</keyword>
<keyword id="KW-0479">Metal-binding</keyword>
<keyword id="KW-0547">Nucleotide-binding</keyword>
<keyword id="KW-0658">Purine biosynthesis</keyword>